<gene>
    <name evidence="1" type="primary">bpt</name>
    <name type="ordered locus">Bcep18194_A4697</name>
</gene>
<proteinExistence type="inferred from homology"/>
<protein>
    <recommendedName>
        <fullName evidence="1">Aspartate/glutamate leucyltransferase</fullName>
        <ecNumber evidence="1">2.3.2.29</ecNumber>
    </recommendedName>
</protein>
<organism>
    <name type="scientific">Burkholderia lata (strain ATCC 17760 / DSM 23089 / LMG 22485 / NCIMB 9086 / R18194 / 383)</name>
    <dbReference type="NCBI Taxonomy" id="482957"/>
    <lineage>
        <taxon>Bacteria</taxon>
        <taxon>Pseudomonadati</taxon>
        <taxon>Pseudomonadota</taxon>
        <taxon>Betaproteobacteria</taxon>
        <taxon>Burkholderiales</taxon>
        <taxon>Burkholderiaceae</taxon>
        <taxon>Burkholderia</taxon>
        <taxon>Burkholderia cepacia complex</taxon>
    </lineage>
</organism>
<dbReference type="EC" id="2.3.2.29" evidence="1"/>
<dbReference type="EMBL" id="CP000151">
    <property type="protein sequence ID" value="ABB08292.1"/>
    <property type="molecule type" value="Genomic_DNA"/>
</dbReference>
<dbReference type="RefSeq" id="WP_011351853.1">
    <property type="nucleotide sequence ID" value="NZ_CADFCT010000004.1"/>
</dbReference>
<dbReference type="SMR" id="Q39GX4"/>
<dbReference type="GeneID" id="45094596"/>
<dbReference type="KEGG" id="bur:Bcep18194_A4697"/>
<dbReference type="PATRIC" id="fig|482957.22.peg.1611"/>
<dbReference type="HOGENOM" id="CLU_077607_0_0_4"/>
<dbReference type="Proteomes" id="UP000002705">
    <property type="component" value="Chromosome 1"/>
</dbReference>
<dbReference type="GO" id="GO:0005737">
    <property type="term" value="C:cytoplasm"/>
    <property type="evidence" value="ECO:0007669"/>
    <property type="project" value="UniProtKB-SubCell"/>
</dbReference>
<dbReference type="GO" id="GO:0004057">
    <property type="term" value="F:arginyl-tRNA--protein transferase activity"/>
    <property type="evidence" value="ECO:0007669"/>
    <property type="project" value="InterPro"/>
</dbReference>
<dbReference type="GO" id="GO:0008914">
    <property type="term" value="F:leucyl-tRNA--protein transferase activity"/>
    <property type="evidence" value="ECO:0007669"/>
    <property type="project" value="UniProtKB-UniRule"/>
</dbReference>
<dbReference type="GO" id="GO:0071596">
    <property type="term" value="P:ubiquitin-dependent protein catabolic process via the N-end rule pathway"/>
    <property type="evidence" value="ECO:0007669"/>
    <property type="project" value="InterPro"/>
</dbReference>
<dbReference type="HAMAP" id="MF_00689">
    <property type="entry name" value="Bpt"/>
    <property type="match status" value="1"/>
</dbReference>
<dbReference type="InterPro" id="IPR016181">
    <property type="entry name" value="Acyl_CoA_acyltransferase"/>
</dbReference>
<dbReference type="InterPro" id="IPR017138">
    <property type="entry name" value="Asp_Glu_LeuTrfase"/>
</dbReference>
<dbReference type="InterPro" id="IPR030700">
    <property type="entry name" value="N-end_Aminoacyl_Trfase"/>
</dbReference>
<dbReference type="InterPro" id="IPR007472">
    <property type="entry name" value="N-end_Aminoacyl_Trfase_C"/>
</dbReference>
<dbReference type="InterPro" id="IPR007471">
    <property type="entry name" value="N-end_Aminoacyl_Trfase_N"/>
</dbReference>
<dbReference type="NCBIfam" id="NF002341">
    <property type="entry name" value="PRK01305.1-1"/>
    <property type="match status" value="1"/>
</dbReference>
<dbReference type="NCBIfam" id="NF002342">
    <property type="entry name" value="PRK01305.1-3"/>
    <property type="match status" value="1"/>
</dbReference>
<dbReference type="NCBIfam" id="NF002346">
    <property type="entry name" value="PRK01305.2-3"/>
    <property type="match status" value="1"/>
</dbReference>
<dbReference type="PANTHER" id="PTHR21367">
    <property type="entry name" value="ARGININE-TRNA-PROTEIN TRANSFERASE 1"/>
    <property type="match status" value="1"/>
</dbReference>
<dbReference type="PANTHER" id="PTHR21367:SF1">
    <property type="entry name" value="ARGINYL-TRNA--PROTEIN TRANSFERASE 1"/>
    <property type="match status" value="1"/>
</dbReference>
<dbReference type="Pfam" id="PF04377">
    <property type="entry name" value="ATE_C"/>
    <property type="match status" value="1"/>
</dbReference>
<dbReference type="Pfam" id="PF04376">
    <property type="entry name" value="ATE_N"/>
    <property type="match status" value="1"/>
</dbReference>
<dbReference type="PIRSF" id="PIRSF037208">
    <property type="entry name" value="ATE_pro_prd"/>
    <property type="match status" value="1"/>
</dbReference>
<dbReference type="SUPFAM" id="SSF55729">
    <property type="entry name" value="Acyl-CoA N-acyltransferases (Nat)"/>
    <property type="match status" value="1"/>
</dbReference>
<keyword id="KW-0012">Acyltransferase</keyword>
<keyword id="KW-0963">Cytoplasm</keyword>
<keyword id="KW-0808">Transferase</keyword>
<feature type="chain" id="PRO_0000263178" description="Aspartate/glutamate leucyltransferase">
    <location>
        <begin position="1"/>
        <end position="276"/>
    </location>
</feature>
<reference key="1">
    <citation type="submission" date="2005-10" db="EMBL/GenBank/DDBJ databases">
        <title>Complete sequence of chromosome 1 of Burkholderia sp. 383.</title>
        <authorList>
            <consortium name="US DOE Joint Genome Institute"/>
            <person name="Copeland A."/>
            <person name="Lucas S."/>
            <person name="Lapidus A."/>
            <person name="Barry K."/>
            <person name="Detter J.C."/>
            <person name="Glavina T."/>
            <person name="Hammon N."/>
            <person name="Israni S."/>
            <person name="Pitluck S."/>
            <person name="Chain P."/>
            <person name="Malfatti S."/>
            <person name="Shin M."/>
            <person name="Vergez L."/>
            <person name="Schmutz J."/>
            <person name="Larimer F."/>
            <person name="Land M."/>
            <person name="Kyrpides N."/>
            <person name="Lykidis A."/>
            <person name="Richardson P."/>
        </authorList>
    </citation>
    <scope>NUCLEOTIDE SEQUENCE [LARGE SCALE GENOMIC DNA]</scope>
    <source>
        <strain>ATCC 17760 / DSM 23089 / LMG 22485 / NCIMB 9086 / R18194 / 383</strain>
    </source>
</reference>
<accession>Q39GX4</accession>
<name>BPT_BURL3</name>
<comment type="function">
    <text evidence="1">Functions in the N-end rule pathway of protein degradation where it conjugates Leu from its aminoacyl-tRNA to the N-termini of proteins containing an N-terminal aspartate or glutamate.</text>
</comment>
<comment type="catalytic activity">
    <reaction evidence="1">
        <text>N-terminal L-glutamyl-[protein] + L-leucyl-tRNA(Leu) = N-terminal L-leucyl-L-glutamyl-[protein] + tRNA(Leu) + H(+)</text>
        <dbReference type="Rhea" id="RHEA:50412"/>
        <dbReference type="Rhea" id="RHEA-COMP:9613"/>
        <dbReference type="Rhea" id="RHEA-COMP:9622"/>
        <dbReference type="Rhea" id="RHEA-COMP:12664"/>
        <dbReference type="Rhea" id="RHEA-COMP:12668"/>
        <dbReference type="ChEBI" id="CHEBI:15378"/>
        <dbReference type="ChEBI" id="CHEBI:64721"/>
        <dbReference type="ChEBI" id="CHEBI:78442"/>
        <dbReference type="ChEBI" id="CHEBI:78494"/>
        <dbReference type="ChEBI" id="CHEBI:133041"/>
        <dbReference type="EC" id="2.3.2.29"/>
    </reaction>
</comment>
<comment type="catalytic activity">
    <reaction evidence="1">
        <text>N-terminal L-aspartyl-[protein] + L-leucyl-tRNA(Leu) = N-terminal L-leucyl-L-aspartyl-[protein] + tRNA(Leu) + H(+)</text>
        <dbReference type="Rhea" id="RHEA:50420"/>
        <dbReference type="Rhea" id="RHEA-COMP:9613"/>
        <dbReference type="Rhea" id="RHEA-COMP:9622"/>
        <dbReference type="Rhea" id="RHEA-COMP:12669"/>
        <dbReference type="Rhea" id="RHEA-COMP:12674"/>
        <dbReference type="ChEBI" id="CHEBI:15378"/>
        <dbReference type="ChEBI" id="CHEBI:64720"/>
        <dbReference type="ChEBI" id="CHEBI:78442"/>
        <dbReference type="ChEBI" id="CHEBI:78494"/>
        <dbReference type="ChEBI" id="CHEBI:133042"/>
        <dbReference type="EC" id="2.3.2.29"/>
    </reaction>
</comment>
<comment type="subcellular location">
    <subcellularLocation>
        <location evidence="1">Cytoplasm</location>
    </subcellularLocation>
</comment>
<comment type="similarity">
    <text evidence="1">Belongs to the R-transferase family. Bpt subfamily.</text>
</comment>
<sequence length="276" mass="31250">MTHPTELPLSPLSALQFYATAPYPCSYLDGRVARSQVATPSHLINSDIYTELVKAGFRRSGVFTYRPYCDGCRACVPVRVPVDAFAPSRTQRRMWKRHRTLVATVSPLHYDEEHYALYMRYQSARHAGGGMDRDSRDQYEQFLLQSRINSRLVEFRDLDAPGGEPGKLRMVSMIDILGDGLSSVYTFFEPDDQHTSYGTYNILWQIEQAKSLGLPYVYLGYWIRESPKMAYKANFHPLEGLIDGRWKILDPERIDLPPVDAALARAPLPGGHSGSG</sequence>
<evidence type="ECO:0000255" key="1">
    <source>
        <dbReference type="HAMAP-Rule" id="MF_00689"/>
    </source>
</evidence>